<organism>
    <name type="scientific">Mus musculus</name>
    <name type="common">Mouse</name>
    <dbReference type="NCBI Taxonomy" id="10090"/>
    <lineage>
        <taxon>Eukaryota</taxon>
        <taxon>Metazoa</taxon>
        <taxon>Chordata</taxon>
        <taxon>Craniata</taxon>
        <taxon>Vertebrata</taxon>
        <taxon>Euteleostomi</taxon>
        <taxon>Mammalia</taxon>
        <taxon>Eutheria</taxon>
        <taxon>Euarchontoglires</taxon>
        <taxon>Glires</taxon>
        <taxon>Rodentia</taxon>
        <taxon>Myomorpha</taxon>
        <taxon>Muroidea</taxon>
        <taxon>Muridae</taxon>
        <taxon>Murinae</taxon>
        <taxon>Mus</taxon>
        <taxon>Mus</taxon>
    </lineage>
</organism>
<accession>Q8R1R4</accession>
<accession>B2ZC71</accession>
<accession>B2ZC72</accession>
<accession>Q9D8F2</accession>
<protein>
    <recommendedName>
        <fullName>Interleukin-34</fullName>
        <shortName>IL-34</shortName>
    </recommendedName>
</protein>
<sequence>MPWGLAWLYCLGILLDVALGNENLEIWTLTQDKECDLTGYLRGKLQYKNRLQYMKHYFPINYRIAVPYEGVLRVANITRLQKAHVSERELRYLWVLVSLNATESVMDVLLEGHPSWKYLQEVQTLLENVQRSLMDVEIGPHVEAVLSLLSTPGLSLKLVRPKALLDNCFRVMELLYCSCCKQSPILKWQDCELPRLHPHSPGSLMQCTATNVYPLSRQTPTSLPGSPSSSHGSLP</sequence>
<name>IL34_MOUSE</name>
<gene>
    <name type="primary">Il34</name>
</gene>
<reference key="1">
    <citation type="journal article" date="2008" name="Science">
        <title>Discovery of a cytokine and its receptor by functional screening of the extracellular proteome.</title>
        <authorList>
            <person name="Lin H."/>
            <person name="Lee E."/>
            <person name="Hestir K."/>
            <person name="Leo C."/>
            <person name="Huang M."/>
            <person name="Bosch E."/>
            <person name="Halenbeck R."/>
            <person name="Wu G."/>
            <person name="Zhou A."/>
            <person name="Behrens D."/>
            <person name="Hollenbaugh D."/>
            <person name="Linnemann T."/>
            <person name="Qin M."/>
            <person name="Wong J."/>
            <person name="Chu K."/>
            <person name="Doberstein S.K."/>
            <person name="Williams L.T."/>
        </authorList>
    </citation>
    <scope>NUCLEOTIDE SEQUENCE [MRNA] (ISOFORMS 1 AND 3)</scope>
    <source>
        <strain>C57BL/6J</strain>
    </source>
</reference>
<reference key="2">
    <citation type="journal article" date="2005" name="Science">
        <title>The transcriptional landscape of the mammalian genome.</title>
        <authorList>
            <person name="Carninci P."/>
            <person name="Kasukawa T."/>
            <person name="Katayama S."/>
            <person name="Gough J."/>
            <person name="Frith M.C."/>
            <person name="Maeda N."/>
            <person name="Oyama R."/>
            <person name="Ravasi T."/>
            <person name="Lenhard B."/>
            <person name="Wells C."/>
            <person name="Kodzius R."/>
            <person name="Shimokawa K."/>
            <person name="Bajic V.B."/>
            <person name="Brenner S.E."/>
            <person name="Batalov S."/>
            <person name="Forrest A.R."/>
            <person name="Zavolan M."/>
            <person name="Davis M.J."/>
            <person name="Wilming L.G."/>
            <person name="Aidinis V."/>
            <person name="Allen J.E."/>
            <person name="Ambesi-Impiombato A."/>
            <person name="Apweiler R."/>
            <person name="Aturaliya R.N."/>
            <person name="Bailey T.L."/>
            <person name="Bansal M."/>
            <person name="Baxter L."/>
            <person name="Beisel K.W."/>
            <person name="Bersano T."/>
            <person name="Bono H."/>
            <person name="Chalk A.M."/>
            <person name="Chiu K.P."/>
            <person name="Choudhary V."/>
            <person name="Christoffels A."/>
            <person name="Clutterbuck D.R."/>
            <person name="Crowe M.L."/>
            <person name="Dalla E."/>
            <person name="Dalrymple B.P."/>
            <person name="de Bono B."/>
            <person name="Della Gatta G."/>
            <person name="di Bernardo D."/>
            <person name="Down T."/>
            <person name="Engstrom P."/>
            <person name="Fagiolini M."/>
            <person name="Faulkner G."/>
            <person name="Fletcher C.F."/>
            <person name="Fukushima T."/>
            <person name="Furuno M."/>
            <person name="Futaki S."/>
            <person name="Gariboldi M."/>
            <person name="Georgii-Hemming P."/>
            <person name="Gingeras T.R."/>
            <person name="Gojobori T."/>
            <person name="Green R.E."/>
            <person name="Gustincich S."/>
            <person name="Harbers M."/>
            <person name="Hayashi Y."/>
            <person name="Hensch T.K."/>
            <person name="Hirokawa N."/>
            <person name="Hill D."/>
            <person name="Huminiecki L."/>
            <person name="Iacono M."/>
            <person name="Ikeo K."/>
            <person name="Iwama A."/>
            <person name="Ishikawa T."/>
            <person name="Jakt M."/>
            <person name="Kanapin A."/>
            <person name="Katoh M."/>
            <person name="Kawasawa Y."/>
            <person name="Kelso J."/>
            <person name="Kitamura H."/>
            <person name="Kitano H."/>
            <person name="Kollias G."/>
            <person name="Krishnan S.P."/>
            <person name="Kruger A."/>
            <person name="Kummerfeld S.K."/>
            <person name="Kurochkin I.V."/>
            <person name="Lareau L.F."/>
            <person name="Lazarevic D."/>
            <person name="Lipovich L."/>
            <person name="Liu J."/>
            <person name="Liuni S."/>
            <person name="McWilliam S."/>
            <person name="Madan Babu M."/>
            <person name="Madera M."/>
            <person name="Marchionni L."/>
            <person name="Matsuda H."/>
            <person name="Matsuzawa S."/>
            <person name="Miki H."/>
            <person name="Mignone F."/>
            <person name="Miyake S."/>
            <person name="Morris K."/>
            <person name="Mottagui-Tabar S."/>
            <person name="Mulder N."/>
            <person name="Nakano N."/>
            <person name="Nakauchi H."/>
            <person name="Ng P."/>
            <person name="Nilsson R."/>
            <person name="Nishiguchi S."/>
            <person name="Nishikawa S."/>
            <person name="Nori F."/>
            <person name="Ohara O."/>
            <person name="Okazaki Y."/>
            <person name="Orlando V."/>
            <person name="Pang K.C."/>
            <person name="Pavan W.J."/>
            <person name="Pavesi G."/>
            <person name="Pesole G."/>
            <person name="Petrovsky N."/>
            <person name="Piazza S."/>
            <person name="Reed J."/>
            <person name="Reid J.F."/>
            <person name="Ring B.Z."/>
            <person name="Ringwald M."/>
            <person name="Rost B."/>
            <person name="Ruan Y."/>
            <person name="Salzberg S.L."/>
            <person name="Sandelin A."/>
            <person name="Schneider C."/>
            <person name="Schoenbach C."/>
            <person name="Sekiguchi K."/>
            <person name="Semple C.A."/>
            <person name="Seno S."/>
            <person name="Sessa L."/>
            <person name="Sheng Y."/>
            <person name="Shibata Y."/>
            <person name="Shimada H."/>
            <person name="Shimada K."/>
            <person name="Silva D."/>
            <person name="Sinclair B."/>
            <person name="Sperling S."/>
            <person name="Stupka E."/>
            <person name="Sugiura K."/>
            <person name="Sultana R."/>
            <person name="Takenaka Y."/>
            <person name="Taki K."/>
            <person name="Tammoja K."/>
            <person name="Tan S.L."/>
            <person name="Tang S."/>
            <person name="Taylor M.S."/>
            <person name="Tegner J."/>
            <person name="Teichmann S.A."/>
            <person name="Ueda H.R."/>
            <person name="van Nimwegen E."/>
            <person name="Verardo R."/>
            <person name="Wei C.L."/>
            <person name="Yagi K."/>
            <person name="Yamanishi H."/>
            <person name="Zabarovsky E."/>
            <person name="Zhu S."/>
            <person name="Zimmer A."/>
            <person name="Hide W."/>
            <person name="Bult C."/>
            <person name="Grimmond S.M."/>
            <person name="Teasdale R.D."/>
            <person name="Liu E.T."/>
            <person name="Brusic V."/>
            <person name="Quackenbush J."/>
            <person name="Wahlestedt C."/>
            <person name="Mattick J.S."/>
            <person name="Hume D.A."/>
            <person name="Kai C."/>
            <person name="Sasaki D."/>
            <person name="Tomaru Y."/>
            <person name="Fukuda S."/>
            <person name="Kanamori-Katayama M."/>
            <person name="Suzuki M."/>
            <person name="Aoki J."/>
            <person name="Arakawa T."/>
            <person name="Iida J."/>
            <person name="Imamura K."/>
            <person name="Itoh M."/>
            <person name="Kato T."/>
            <person name="Kawaji H."/>
            <person name="Kawagashira N."/>
            <person name="Kawashima T."/>
            <person name="Kojima M."/>
            <person name="Kondo S."/>
            <person name="Konno H."/>
            <person name="Nakano K."/>
            <person name="Ninomiya N."/>
            <person name="Nishio T."/>
            <person name="Okada M."/>
            <person name="Plessy C."/>
            <person name="Shibata K."/>
            <person name="Shiraki T."/>
            <person name="Suzuki S."/>
            <person name="Tagami M."/>
            <person name="Waki K."/>
            <person name="Watahiki A."/>
            <person name="Okamura-Oho Y."/>
            <person name="Suzuki H."/>
            <person name="Kawai J."/>
            <person name="Hayashizaki Y."/>
        </authorList>
    </citation>
    <scope>NUCLEOTIDE SEQUENCE [LARGE SCALE MRNA] (ISOFORM 2)</scope>
    <source>
        <strain>C57BL/6J</strain>
        <tissue>Small intestine</tissue>
    </source>
</reference>
<reference key="3">
    <citation type="journal article" date="2004" name="Genome Res.">
        <title>The status, quality, and expansion of the NIH full-length cDNA project: the Mammalian Gene Collection (MGC).</title>
        <authorList>
            <consortium name="The MGC Project Team"/>
        </authorList>
    </citation>
    <scope>NUCLEOTIDE SEQUENCE [LARGE SCALE MRNA] (ISOFORM 1)</scope>
    <source>
        <strain>FVB/N</strain>
        <tissue>Salivary gland</tissue>
    </source>
</reference>
<comment type="function">
    <text evidence="1">Cytokine that promotes the proliferation, survival and differentiation of monocytes and macrophages. Promotes the release of pro-inflammatory chemokines, and thereby plays an important role in innate immunity and in inflammatory processes. Plays an important role in the regulation of osteoclast proliferation and differentiation, and in the regulation of bone resorption. Signaling via CSF1R and its downstream effectors stimulates phosphorylation of MAPK1/ERK2 AND MAPK3/ERK1 (By similarity).</text>
</comment>
<comment type="subunit">
    <text evidence="1">Homodimer. Interacts with CSF1R (By similarity).</text>
</comment>
<comment type="subcellular location">
    <subcellularLocation>
        <location evidence="1">Secreted</location>
    </subcellularLocation>
</comment>
<comment type="alternative products">
    <event type="alternative splicing"/>
    <isoform>
        <id>Q8R1R4-1</id>
        <name>1</name>
        <sequence type="displayed"/>
    </isoform>
    <isoform>
        <id>Q8R1R4-2</id>
        <name>2</name>
        <sequence type="described" ref="VSP_026632"/>
    </isoform>
    <isoform>
        <id>Q8R1R4-3</id>
        <name>3</name>
        <sequence type="described" ref="VSP_035080"/>
    </isoform>
</comment>
<comment type="similarity">
    <text evidence="5">Belongs to the IL-34 family.</text>
</comment>
<dbReference type="EMBL" id="EU636995">
    <property type="protein sequence ID" value="ACD13453.1"/>
    <property type="molecule type" value="mRNA"/>
</dbReference>
<dbReference type="EMBL" id="EU636996">
    <property type="protein sequence ID" value="ACD13454.1"/>
    <property type="molecule type" value="mRNA"/>
</dbReference>
<dbReference type="EMBL" id="AK008082">
    <property type="protein sequence ID" value="BAB25448.1"/>
    <property type="molecule type" value="mRNA"/>
</dbReference>
<dbReference type="EMBL" id="BC016254">
    <property type="protein sequence ID" value="AAH16254.1"/>
    <property type="molecule type" value="mRNA"/>
</dbReference>
<dbReference type="CCDS" id="CCDS52669.1">
    <molecule id="Q8R1R4-1"/>
</dbReference>
<dbReference type="CCDS" id="CCDS52670.1">
    <molecule id="Q8R1R4-2"/>
</dbReference>
<dbReference type="RefSeq" id="NP_001128572.1">
    <molecule id="Q8R1R4-1"/>
    <property type="nucleotide sequence ID" value="NM_001135100.2"/>
</dbReference>
<dbReference type="RefSeq" id="NP_083922.1">
    <molecule id="Q8R1R4-2"/>
    <property type="nucleotide sequence ID" value="NM_029646.3"/>
</dbReference>
<dbReference type="RefSeq" id="XP_006531548.1">
    <molecule id="Q8R1R4-3"/>
    <property type="nucleotide sequence ID" value="XM_006531485.5"/>
</dbReference>
<dbReference type="RefSeq" id="XP_030099697.1">
    <molecule id="Q8R1R4-1"/>
    <property type="nucleotide sequence ID" value="XM_030243837.2"/>
</dbReference>
<dbReference type="RefSeq" id="XP_036010259.1">
    <molecule id="Q8R1R4-1"/>
    <property type="nucleotide sequence ID" value="XM_036154366.1"/>
</dbReference>
<dbReference type="RefSeq" id="XP_036010260.1">
    <molecule id="Q8R1R4-1"/>
    <property type="nucleotide sequence ID" value="XM_036154367.1"/>
</dbReference>
<dbReference type="RefSeq" id="XP_036010261.1">
    <molecule id="Q8R1R4-1"/>
    <property type="nucleotide sequence ID" value="XM_036154368.1"/>
</dbReference>
<dbReference type="PDB" id="4EXN">
    <property type="method" value="X-ray"/>
    <property type="resolution" value="2.70 A"/>
    <property type="chains" value="A/B/E/F=21-194"/>
</dbReference>
<dbReference type="PDB" id="4EXP">
    <property type="method" value="X-ray"/>
    <property type="resolution" value="2.80 A"/>
    <property type="chains" value="A=21-194"/>
</dbReference>
<dbReference type="PDBsum" id="4EXN"/>
<dbReference type="PDBsum" id="4EXP"/>
<dbReference type="SMR" id="Q8R1R4"/>
<dbReference type="BioGRID" id="218168">
    <property type="interactions" value="2"/>
</dbReference>
<dbReference type="FunCoup" id="Q8R1R4">
    <property type="interactions" value="685"/>
</dbReference>
<dbReference type="STRING" id="10090.ENSMUSP00000076120"/>
<dbReference type="GlyCosmos" id="Q8R1R4">
    <property type="glycosylation" value="1 site, No reported glycans"/>
</dbReference>
<dbReference type="GlyGen" id="Q8R1R4">
    <property type="glycosylation" value="1 site"/>
</dbReference>
<dbReference type="jPOST" id="Q8R1R4"/>
<dbReference type="PaxDb" id="10090-ENSMUSP00000076120"/>
<dbReference type="ProteomicsDB" id="269395">
    <molecule id="Q8R1R4-1"/>
</dbReference>
<dbReference type="ProteomicsDB" id="269396">
    <molecule id="Q8R1R4-2"/>
</dbReference>
<dbReference type="ProteomicsDB" id="269397">
    <molecule id="Q8R1R4-3"/>
</dbReference>
<dbReference type="ABCD" id="Q8R1R4">
    <property type="antibodies" value="1 sequenced antibody"/>
</dbReference>
<dbReference type="Antibodypedia" id="30010">
    <property type="antibodies" value="454 antibodies from 32 providers"/>
</dbReference>
<dbReference type="Ensembl" id="ENSMUST00000076846.11">
    <molecule id="Q8R1R4-1"/>
    <property type="protein sequence ID" value="ENSMUSP00000076120.5"/>
    <property type="gene ID" value="ENSMUSG00000031750.16"/>
</dbReference>
<dbReference type="Ensembl" id="ENSMUST00000150680.2">
    <molecule id="Q8R1R4-2"/>
    <property type="protein sequence ID" value="ENSMUSP00000114398.2"/>
    <property type="gene ID" value="ENSMUSG00000031750.16"/>
</dbReference>
<dbReference type="GeneID" id="76527"/>
<dbReference type="KEGG" id="mmu:76527"/>
<dbReference type="UCSC" id="uc009nkz.3">
    <molecule id="Q8R1R4-2"/>
    <property type="organism name" value="mouse"/>
</dbReference>
<dbReference type="UCSC" id="uc009nla.3">
    <molecule id="Q8R1R4-1"/>
    <property type="organism name" value="mouse"/>
</dbReference>
<dbReference type="UCSC" id="uc012gko.1">
    <molecule id="Q8R1R4-3"/>
    <property type="organism name" value="mouse"/>
</dbReference>
<dbReference type="AGR" id="MGI:1923777"/>
<dbReference type="CTD" id="146433"/>
<dbReference type="MGI" id="MGI:1923777">
    <property type="gene designation" value="Il34"/>
</dbReference>
<dbReference type="VEuPathDB" id="HostDB:ENSMUSG00000031750"/>
<dbReference type="eggNOG" id="ENOG502S2ET">
    <property type="taxonomic scope" value="Eukaryota"/>
</dbReference>
<dbReference type="GeneTree" id="ENSGT00390000000932"/>
<dbReference type="HOGENOM" id="CLU_102223_1_0_1"/>
<dbReference type="InParanoid" id="Q8R1R4"/>
<dbReference type="OMA" id="WQDCELP"/>
<dbReference type="OrthoDB" id="9902423at2759"/>
<dbReference type="PhylomeDB" id="Q8R1R4"/>
<dbReference type="TreeFam" id="TF337386"/>
<dbReference type="Reactome" id="R-MMU-449836">
    <property type="pathway name" value="Other interleukin signaling"/>
</dbReference>
<dbReference type="BioGRID-ORCS" id="76527">
    <property type="hits" value="2 hits in 76 CRISPR screens"/>
</dbReference>
<dbReference type="EvolutionaryTrace" id="Q8R1R4"/>
<dbReference type="PRO" id="PR:Q8R1R4"/>
<dbReference type="Proteomes" id="UP000000589">
    <property type="component" value="Chromosome 8"/>
</dbReference>
<dbReference type="RNAct" id="Q8R1R4">
    <property type="molecule type" value="protein"/>
</dbReference>
<dbReference type="Bgee" id="ENSMUSG00000031750">
    <property type="expression patterns" value="Expressed in superior frontal gyrus and 84 other cell types or tissues"/>
</dbReference>
<dbReference type="GO" id="GO:0005615">
    <property type="term" value="C:extracellular space"/>
    <property type="evidence" value="ECO:0000250"/>
    <property type="project" value="UniProtKB"/>
</dbReference>
<dbReference type="GO" id="GO:0005125">
    <property type="term" value="F:cytokine activity"/>
    <property type="evidence" value="ECO:0007669"/>
    <property type="project" value="UniProtKB-KW"/>
</dbReference>
<dbReference type="GO" id="GO:0008083">
    <property type="term" value="F:growth factor activity"/>
    <property type="evidence" value="ECO:0007669"/>
    <property type="project" value="UniProtKB-KW"/>
</dbReference>
<dbReference type="GO" id="GO:0005157">
    <property type="term" value="F:macrophage colony-stimulating factor receptor binding"/>
    <property type="evidence" value="ECO:0000250"/>
    <property type="project" value="UniProtKB"/>
</dbReference>
<dbReference type="GO" id="GO:0006954">
    <property type="term" value="P:inflammatory response"/>
    <property type="evidence" value="ECO:0007669"/>
    <property type="project" value="UniProtKB-KW"/>
</dbReference>
<dbReference type="GO" id="GO:0045087">
    <property type="term" value="P:innate immune response"/>
    <property type="evidence" value="ECO:0007669"/>
    <property type="project" value="UniProtKB-KW"/>
</dbReference>
<dbReference type="GO" id="GO:0061514">
    <property type="term" value="P:interleukin-34-mediated signaling pathway"/>
    <property type="evidence" value="ECO:0007669"/>
    <property type="project" value="Ensembl"/>
</dbReference>
<dbReference type="GO" id="GO:0061518">
    <property type="term" value="P:microglial cell proliferation"/>
    <property type="evidence" value="ECO:0000316"/>
    <property type="project" value="ARUK-UCL"/>
</dbReference>
<dbReference type="GO" id="GO:0008284">
    <property type="term" value="P:positive regulation of cell population proliferation"/>
    <property type="evidence" value="ECO:0000250"/>
    <property type="project" value="UniProtKB"/>
</dbReference>
<dbReference type="GO" id="GO:0010628">
    <property type="term" value="P:positive regulation of gene expression"/>
    <property type="evidence" value="ECO:0000314"/>
    <property type="project" value="ARUK-UCL"/>
</dbReference>
<dbReference type="GO" id="GO:0010759">
    <property type="term" value="P:positive regulation of macrophage chemotaxis"/>
    <property type="evidence" value="ECO:0007669"/>
    <property type="project" value="Ensembl"/>
</dbReference>
<dbReference type="GO" id="GO:0045651">
    <property type="term" value="P:positive regulation of macrophage differentiation"/>
    <property type="evidence" value="ECO:0007669"/>
    <property type="project" value="Ensembl"/>
</dbReference>
<dbReference type="GO" id="GO:0120041">
    <property type="term" value="P:positive regulation of macrophage proliferation"/>
    <property type="evidence" value="ECO:0007669"/>
    <property type="project" value="Ensembl"/>
</dbReference>
<dbReference type="GO" id="GO:0043410">
    <property type="term" value="P:positive regulation of MAPK cascade"/>
    <property type="evidence" value="ECO:0007669"/>
    <property type="project" value="Ensembl"/>
</dbReference>
<dbReference type="GO" id="GO:0045657">
    <property type="term" value="P:positive regulation of monocyte differentiation"/>
    <property type="evidence" value="ECO:0007669"/>
    <property type="project" value="Ensembl"/>
</dbReference>
<dbReference type="GO" id="GO:0048714">
    <property type="term" value="P:positive regulation of oligodendrocyte differentiation"/>
    <property type="evidence" value="ECO:0000314"/>
    <property type="project" value="UniProtKB"/>
</dbReference>
<dbReference type="GO" id="GO:0001934">
    <property type="term" value="P:positive regulation of protein phosphorylation"/>
    <property type="evidence" value="ECO:0000250"/>
    <property type="project" value="UniProtKB"/>
</dbReference>
<dbReference type="FunFam" id="1.20.1250.80:FF:000001">
    <property type="entry name" value="Interleukin-34"/>
    <property type="match status" value="1"/>
</dbReference>
<dbReference type="Gene3D" id="1.20.1250.80">
    <property type="entry name" value="Interleukin-34"/>
    <property type="match status" value="1"/>
</dbReference>
<dbReference type="InterPro" id="IPR020415">
    <property type="entry name" value="IL-34"/>
</dbReference>
<dbReference type="InterPro" id="IPR038328">
    <property type="entry name" value="IL-34_sf"/>
</dbReference>
<dbReference type="PANTHER" id="PTHR28606">
    <property type="entry name" value="INTERLEUKIN-34"/>
    <property type="match status" value="1"/>
</dbReference>
<dbReference type="PANTHER" id="PTHR28606:SF1">
    <property type="entry name" value="INTERLEUKIN-34"/>
    <property type="match status" value="1"/>
</dbReference>
<dbReference type="Pfam" id="PF15036">
    <property type="entry name" value="IL34"/>
    <property type="match status" value="1"/>
</dbReference>
<dbReference type="PRINTS" id="PR01938">
    <property type="entry name" value="INTRLEUKIN34"/>
</dbReference>
<proteinExistence type="evidence at protein level"/>
<keyword id="KW-0002">3D-structure</keyword>
<keyword id="KW-0025">Alternative splicing</keyword>
<keyword id="KW-0202">Cytokine</keyword>
<keyword id="KW-0325">Glycoprotein</keyword>
<keyword id="KW-0339">Growth factor</keyword>
<keyword id="KW-0391">Immunity</keyword>
<keyword id="KW-0395">Inflammatory response</keyword>
<keyword id="KW-0399">Innate immunity</keyword>
<keyword id="KW-1185">Reference proteome</keyword>
<keyword id="KW-0964">Secreted</keyword>
<keyword id="KW-0732">Signal</keyword>
<evidence type="ECO:0000250" key="1"/>
<evidence type="ECO:0000255" key="2"/>
<evidence type="ECO:0000303" key="3">
    <source>
    </source>
</evidence>
<evidence type="ECO:0000303" key="4">
    <source>
    </source>
</evidence>
<evidence type="ECO:0000305" key="5"/>
<evidence type="ECO:0007829" key="6">
    <source>
        <dbReference type="PDB" id="4EXN"/>
    </source>
</evidence>
<evidence type="ECO:0007829" key="7">
    <source>
        <dbReference type="PDB" id="4EXP"/>
    </source>
</evidence>
<feature type="signal peptide" evidence="2">
    <location>
        <begin position="1"/>
        <end position="20"/>
    </location>
</feature>
<feature type="chain" id="PRO_0000294349" description="Interleukin-34">
    <location>
        <begin position="21"/>
        <end position="235"/>
    </location>
</feature>
<feature type="glycosylation site" description="N-linked (GlcNAc...) asparagine" evidence="2">
    <location>
        <position position="100"/>
    </location>
</feature>
<feature type="splice variant" id="VSP_035080" description="In isoform 3." evidence="4">
    <location>
        <position position="81"/>
    </location>
</feature>
<feature type="splice variant" id="VSP_026632" description="In isoform 2." evidence="3">
    <original>DVEIGPHVEAVLSLLSTPGLSLKLVRPKALLDNCFRVMELLYCSCCKQSPILKWQDCELPRLHPHSPGSLMQCTATNVYPLSRQTPTSLPGSPSSSHGSLP</original>
    <variation>AVGVHLPGHVLVTLLSQLPGLPSPWARSFDTSWELLMMKGCGDWPSRGSCVISSEYSRPKPEAGAAQSLAGQLLPGHGTAVLFLL</variation>
    <location>
        <begin position="135"/>
        <end position="235"/>
    </location>
</feature>
<feature type="strand" evidence="6">
    <location>
        <begin position="31"/>
        <end position="33"/>
    </location>
</feature>
<feature type="helix" evidence="6">
    <location>
        <begin position="37"/>
        <end position="44"/>
    </location>
</feature>
<feature type="helix" evidence="6">
    <location>
        <begin position="47"/>
        <end position="54"/>
    </location>
</feature>
<feature type="turn" evidence="6">
    <location>
        <begin position="55"/>
        <end position="57"/>
    </location>
</feature>
<feature type="strand" evidence="6">
    <location>
        <begin position="64"/>
        <end position="66"/>
    </location>
</feature>
<feature type="helix" evidence="6">
    <location>
        <begin position="68"/>
        <end position="70"/>
    </location>
</feature>
<feature type="helix" evidence="6">
    <location>
        <begin position="74"/>
        <end position="81"/>
    </location>
</feature>
<feature type="turn" evidence="6">
    <location>
        <begin position="82"/>
        <end position="84"/>
    </location>
</feature>
<feature type="helix" evidence="6">
    <location>
        <begin position="87"/>
        <end position="106"/>
    </location>
</feature>
<feature type="helix" evidence="6">
    <location>
        <begin position="116"/>
        <end position="131"/>
    </location>
</feature>
<feature type="turn" evidence="6">
    <location>
        <begin position="132"/>
        <end position="135"/>
    </location>
</feature>
<feature type="helix" evidence="6">
    <location>
        <begin position="140"/>
        <end position="150"/>
    </location>
</feature>
<feature type="strand" evidence="6">
    <location>
        <begin position="157"/>
        <end position="159"/>
    </location>
</feature>
<feature type="helix" evidence="6">
    <location>
        <begin position="161"/>
        <end position="180"/>
    </location>
</feature>
<feature type="strand" evidence="6">
    <location>
        <begin position="181"/>
        <end position="184"/>
    </location>
</feature>
<feature type="helix" evidence="6">
    <location>
        <begin position="186"/>
        <end position="188"/>
    </location>
</feature>
<feature type="strand" evidence="7">
    <location>
        <begin position="189"/>
        <end position="191"/>
    </location>
</feature>